<gene>
    <name type="primary">MT-CYB</name>
    <name type="synonym">COB</name>
    <name type="synonym">CYTB</name>
    <name type="synonym">MTCYB</name>
</gene>
<proteinExistence type="inferred from homology"/>
<evidence type="ECO:0000250" key="1"/>
<evidence type="ECO:0000250" key="2">
    <source>
        <dbReference type="UniProtKB" id="P00157"/>
    </source>
</evidence>
<evidence type="ECO:0000255" key="3">
    <source>
        <dbReference type="PROSITE-ProRule" id="PRU00967"/>
    </source>
</evidence>
<evidence type="ECO:0000255" key="4">
    <source>
        <dbReference type="PROSITE-ProRule" id="PRU00968"/>
    </source>
</evidence>
<dbReference type="EMBL" id="AF249974">
    <property type="protein sequence ID" value="AAK67832.1"/>
    <property type="molecule type" value="Genomic_DNA"/>
</dbReference>
<dbReference type="GO" id="GO:0005743">
    <property type="term" value="C:mitochondrial inner membrane"/>
    <property type="evidence" value="ECO:0007669"/>
    <property type="project" value="UniProtKB-SubCell"/>
</dbReference>
<dbReference type="GO" id="GO:0045275">
    <property type="term" value="C:respiratory chain complex III"/>
    <property type="evidence" value="ECO:0007669"/>
    <property type="project" value="InterPro"/>
</dbReference>
<dbReference type="GO" id="GO:0046872">
    <property type="term" value="F:metal ion binding"/>
    <property type="evidence" value="ECO:0007669"/>
    <property type="project" value="UniProtKB-KW"/>
</dbReference>
<dbReference type="GO" id="GO:0008121">
    <property type="term" value="F:ubiquinol-cytochrome-c reductase activity"/>
    <property type="evidence" value="ECO:0007669"/>
    <property type="project" value="InterPro"/>
</dbReference>
<dbReference type="GO" id="GO:0006122">
    <property type="term" value="P:mitochondrial electron transport, ubiquinol to cytochrome c"/>
    <property type="evidence" value="ECO:0007669"/>
    <property type="project" value="TreeGrafter"/>
</dbReference>
<dbReference type="CDD" id="cd00290">
    <property type="entry name" value="cytochrome_b_C"/>
    <property type="match status" value="1"/>
</dbReference>
<dbReference type="CDD" id="cd00284">
    <property type="entry name" value="Cytochrome_b_N"/>
    <property type="match status" value="1"/>
</dbReference>
<dbReference type="FunFam" id="1.20.810.10:FF:000002">
    <property type="entry name" value="Cytochrome b"/>
    <property type="match status" value="1"/>
</dbReference>
<dbReference type="Gene3D" id="1.20.810.10">
    <property type="entry name" value="Cytochrome Bc1 Complex, Chain C"/>
    <property type="match status" value="1"/>
</dbReference>
<dbReference type="InterPro" id="IPR005798">
    <property type="entry name" value="Cyt_b/b6_C"/>
</dbReference>
<dbReference type="InterPro" id="IPR036150">
    <property type="entry name" value="Cyt_b/b6_C_sf"/>
</dbReference>
<dbReference type="InterPro" id="IPR005797">
    <property type="entry name" value="Cyt_b/b6_N"/>
</dbReference>
<dbReference type="InterPro" id="IPR027387">
    <property type="entry name" value="Cytb/b6-like_sf"/>
</dbReference>
<dbReference type="InterPro" id="IPR030689">
    <property type="entry name" value="Cytochrome_b"/>
</dbReference>
<dbReference type="InterPro" id="IPR048260">
    <property type="entry name" value="Cytochrome_b_C_euk/bac"/>
</dbReference>
<dbReference type="InterPro" id="IPR048259">
    <property type="entry name" value="Cytochrome_b_N_euk/bac"/>
</dbReference>
<dbReference type="InterPro" id="IPR016174">
    <property type="entry name" value="Di-haem_cyt_TM"/>
</dbReference>
<dbReference type="PANTHER" id="PTHR19271">
    <property type="entry name" value="CYTOCHROME B"/>
    <property type="match status" value="1"/>
</dbReference>
<dbReference type="PANTHER" id="PTHR19271:SF16">
    <property type="entry name" value="CYTOCHROME B"/>
    <property type="match status" value="1"/>
</dbReference>
<dbReference type="Pfam" id="PF00032">
    <property type="entry name" value="Cytochrom_B_C"/>
    <property type="match status" value="1"/>
</dbReference>
<dbReference type="Pfam" id="PF00033">
    <property type="entry name" value="Cytochrome_B"/>
    <property type="match status" value="1"/>
</dbReference>
<dbReference type="PIRSF" id="PIRSF038885">
    <property type="entry name" value="COB"/>
    <property type="match status" value="1"/>
</dbReference>
<dbReference type="SUPFAM" id="SSF81648">
    <property type="entry name" value="a domain/subunit of cytochrome bc1 complex (Ubiquinol-cytochrome c reductase)"/>
    <property type="match status" value="1"/>
</dbReference>
<dbReference type="SUPFAM" id="SSF81342">
    <property type="entry name" value="Transmembrane di-heme cytochromes"/>
    <property type="match status" value="1"/>
</dbReference>
<dbReference type="PROSITE" id="PS51003">
    <property type="entry name" value="CYTB_CTER"/>
    <property type="match status" value="1"/>
</dbReference>
<dbReference type="PROSITE" id="PS51002">
    <property type="entry name" value="CYTB_NTER"/>
    <property type="match status" value="1"/>
</dbReference>
<accession>Q955G5</accession>
<reference key="1">
    <citation type="journal article" date="2001" name="Mol. Biol. Evol.">
        <title>Molecular insights into the evolution of the family Bovidae: a nuclear DNA perspective.</title>
        <authorList>
            <person name="Matthee C.A."/>
            <person name="Davis S.K."/>
        </authorList>
    </citation>
    <scope>NUCLEOTIDE SEQUENCE [GENOMIC DNA]</scope>
</reference>
<name>CYB_LITWA</name>
<sequence length="379" mass="42594">MTNIRKSHPLMKIVNNAFIDLPAPSNISSWWNFGSLLGICLILQILTGLFLAMHYTADTATAFSSVTHICRDVNYGWIIRYMHANGASMFFICLFMHVGRGLYYGSYTFLETWNIGVILLFATMATAFMGYVLPWGQMFFWGATVITNLLSAIPYIGTNLVXWILGGFXMDKATLTRFFAXHXILPFMIAALAXMHLXFXXETGSNNPPGISSDADKIPFHPYYTIKDILGALLLILALMLLVLFAPDLLGDPDNYTPANPLNTPPHIKPEWYFLFAYAILRSIPNKLGGVLALVLSILILILMPLLHTSKQRSMMFRPISQCLFWILVADLLTLTWIGGQPVEHPYIIIGQLASIMYFLLILVLMPVTSNIENNLLKW</sequence>
<protein>
    <recommendedName>
        <fullName>Cytochrome b</fullName>
    </recommendedName>
    <alternativeName>
        <fullName>Complex III subunit 3</fullName>
    </alternativeName>
    <alternativeName>
        <fullName>Complex III subunit III</fullName>
    </alternativeName>
    <alternativeName>
        <fullName>Cytochrome b-c1 complex subunit 3</fullName>
    </alternativeName>
    <alternativeName>
        <fullName>Ubiquinol-cytochrome-c reductase complex cytochrome b subunit</fullName>
    </alternativeName>
</protein>
<organism>
    <name type="scientific">Litocranius walleri</name>
    <name type="common">Gerenuk</name>
    <dbReference type="NCBI Taxonomy" id="69311"/>
    <lineage>
        <taxon>Eukaryota</taxon>
        <taxon>Metazoa</taxon>
        <taxon>Chordata</taxon>
        <taxon>Craniata</taxon>
        <taxon>Vertebrata</taxon>
        <taxon>Euteleostomi</taxon>
        <taxon>Mammalia</taxon>
        <taxon>Eutheria</taxon>
        <taxon>Laurasiatheria</taxon>
        <taxon>Artiodactyla</taxon>
        <taxon>Ruminantia</taxon>
        <taxon>Pecora</taxon>
        <taxon>Bovidae</taxon>
        <taxon>Antilopinae</taxon>
        <taxon>Litocranius</taxon>
    </lineage>
</organism>
<feature type="chain" id="PRO_0000254811" description="Cytochrome b">
    <location>
        <begin position="1"/>
        <end position="379"/>
    </location>
</feature>
<feature type="transmembrane region" description="Helical" evidence="2">
    <location>
        <begin position="33"/>
        <end position="53"/>
    </location>
</feature>
<feature type="transmembrane region" description="Helical" evidence="2">
    <location>
        <begin position="77"/>
        <end position="98"/>
    </location>
</feature>
<feature type="transmembrane region" description="Helical" evidence="2">
    <location>
        <begin position="113"/>
        <end position="133"/>
    </location>
</feature>
<feature type="transmembrane region" description="Helical" evidence="2">
    <location>
        <begin position="178"/>
        <end position="198"/>
    </location>
</feature>
<feature type="transmembrane region" description="Helical" evidence="2">
    <location>
        <begin position="226"/>
        <end position="246"/>
    </location>
</feature>
<feature type="transmembrane region" description="Helical" evidence="2">
    <location>
        <begin position="288"/>
        <end position="308"/>
    </location>
</feature>
<feature type="transmembrane region" description="Helical" evidence="2">
    <location>
        <begin position="320"/>
        <end position="340"/>
    </location>
</feature>
<feature type="transmembrane region" description="Helical" evidence="2">
    <location>
        <begin position="347"/>
        <end position="367"/>
    </location>
</feature>
<feature type="binding site" description="axial binding residue" evidence="2">
    <location>
        <position position="83"/>
    </location>
    <ligand>
        <name>heme b</name>
        <dbReference type="ChEBI" id="CHEBI:60344"/>
        <label>b562</label>
    </ligand>
    <ligandPart>
        <name>Fe</name>
        <dbReference type="ChEBI" id="CHEBI:18248"/>
    </ligandPart>
</feature>
<feature type="binding site" description="axial binding residue" evidence="2">
    <location>
        <position position="97"/>
    </location>
    <ligand>
        <name>heme b</name>
        <dbReference type="ChEBI" id="CHEBI:60344"/>
        <label>b566</label>
    </ligand>
    <ligandPart>
        <name>Fe</name>
        <dbReference type="ChEBI" id="CHEBI:18248"/>
    </ligandPart>
</feature>
<feature type="binding site" description="axial binding residue" evidence="2">
    <location>
        <position position="182"/>
    </location>
    <ligand>
        <name>heme b</name>
        <dbReference type="ChEBI" id="CHEBI:60344"/>
        <label>b562</label>
    </ligand>
    <ligandPart>
        <name>Fe</name>
        <dbReference type="ChEBI" id="CHEBI:18248"/>
    </ligandPart>
</feature>
<feature type="binding site" description="axial binding residue" evidence="2">
    <location>
        <position position="196"/>
    </location>
    <ligand>
        <name>heme b</name>
        <dbReference type="ChEBI" id="CHEBI:60344"/>
        <label>b566</label>
    </ligand>
    <ligandPart>
        <name>Fe</name>
        <dbReference type="ChEBI" id="CHEBI:18248"/>
    </ligandPart>
</feature>
<comment type="function">
    <text evidence="2">Component of the ubiquinol-cytochrome c reductase complex (complex III or cytochrome b-c1 complex) that is part of the mitochondrial respiratory chain. The b-c1 complex mediates electron transfer from ubiquinol to cytochrome c. Contributes to the generation of a proton gradient across the mitochondrial membrane that is then used for ATP synthesis.</text>
</comment>
<comment type="cofactor">
    <cofactor evidence="2">
        <name>heme b</name>
        <dbReference type="ChEBI" id="CHEBI:60344"/>
    </cofactor>
    <text evidence="2">Binds 2 heme b groups non-covalently.</text>
</comment>
<comment type="subunit">
    <text evidence="2">The cytochrome bc1 complex contains 11 subunits: 3 respiratory subunits (MT-CYB, CYC1 and UQCRFS1), 2 core proteins (UQCRC1 and UQCRC2) and 6 low-molecular weight proteins (UQCRH/QCR6, UQCRB/QCR7, UQCRQ/QCR8, UQCR10/QCR9, UQCR11/QCR10 and a cleavage product of UQCRFS1). This cytochrome bc1 complex then forms a dimer.</text>
</comment>
<comment type="subcellular location">
    <subcellularLocation>
        <location evidence="2">Mitochondrion inner membrane</location>
        <topology evidence="2">Multi-pass membrane protein</topology>
    </subcellularLocation>
</comment>
<comment type="miscellaneous">
    <text evidence="1">Heme 1 (or BL or b562) is low-potential and absorbs at about 562 nm, and heme 2 (or BH or b566) is high-potential and absorbs at about 566 nm.</text>
</comment>
<comment type="similarity">
    <text evidence="3 4">Belongs to the cytochrome b family.</text>
</comment>
<comment type="caution">
    <text evidence="2">The full-length protein contains only eight transmembrane helices, not nine as predicted by bioinformatics tools.</text>
</comment>
<keyword id="KW-0249">Electron transport</keyword>
<keyword id="KW-0349">Heme</keyword>
<keyword id="KW-0408">Iron</keyword>
<keyword id="KW-0472">Membrane</keyword>
<keyword id="KW-0479">Metal-binding</keyword>
<keyword id="KW-0496">Mitochondrion</keyword>
<keyword id="KW-0999">Mitochondrion inner membrane</keyword>
<keyword id="KW-0679">Respiratory chain</keyword>
<keyword id="KW-0812">Transmembrane</keyword>
<keyword id="KW-1133">Transmembrane helix</keyword>
<keyword id="KW-0813">Transport</keyword>
<keyword id="KW-0830">Ubiquinone</keyword>
<geneLocation type="mitochondrion"/>